<sequence length="210" mass="24040">MVKYPTGSVMPLRAAQRQGKKALLKKASFSDRGMTLEQQINESNQYYLDAGIAVVHKKPTPIQIVKVDYPKRSRAVIREAYFRQASTTDYNGVYQGYYLDFEAKETRNKTSFPLKNFHEHQILHLEQCLDQEGICFALIGFMTLERYFVTPASFLIQAWQNWKAAGKSSMTLAEIEANSFEIKSGFCPALPYLEAVDRIIADRKQEHGNK</sequence>
<name>RECU_LACDB</name>
<reference key="1">
    <citation type="journal article" date="2006" name="Proc. Natl. Acad. Sci. U.S.A.">
        <title>Comparative genomics of the lactic acid bacteria.</title>
        <authorList>
            <person name="Makarova K.S."/>
            <person name="Slesarev A."/>
            <person name="Wolf Y.I."/>
            <person name="Sorokin A."/>
            <person name="Mirkin B."/>
            <person name="Koonin E.V."/>
            <person name="Pavlov A."/>
            <person name="Pavlova N."/>
            <person name="Karamychev V."/>
            <person name="Polouchine N."/>
            <person name="Shakhova V."/>
            <person name="Grigoriev I."/>
            <person name="Lou Y."/>
            <person name="Rohksar D."/>
            <person name="Lucas S."/>
            <person name="Huang K."/>
            <person name="Goodstein D.M."/>
            <person name="Hawkins T."/>
            <person name="Plengvidhya V."/>
            <person name="Welker D."/>
            <person name="Hughes J."/>
            <person name="Goh Y."/>
            <person name="Benson A."/>
            <person name="Baldwin K."/>
            <person name="Lee J.-H."/>
            <person name="Diaz-Muniz I."/>
            <person name="Dosti B."/>
            <person name="Smeianov V."/>
            <person name="Wechter W."/>
            <person name="Barabote R."/>
            <person name="Lorca G."/>
            <person name="Altermann E."/>
            <person name="Barrangou R."/>
            <person name="Ganesan B."/>
            <person name="Xie Y."/>
            <person name="Rawsthorne H."/>
            <person name="Tamir D."/>
            <person name="Parker C."/>
            <person name="Breidt F."/>
            <person name="Broadbent J.R."/>
            <person name="Hutkins R."/>
            <person name="O'Sullivan D."/>
            <person name="Steele J."/>
            <person name="Unlu G."/>
            <person name="Saier M.H. Jr."/>
            <person name="Klaenhammer T."/>
            <person name="Richardson P."/>
            <person name="Kozyavkin S."/>
            <person name="Weimer B.C."/>
            <person name="Mills D.A."/>
        </authorList>
    </citation>
    <scope>NUCLEOTIDE SEQUENCE [LARGE SCALE GENOMIC DNA]</scope>
    <source>
        <strain>ATCC BAA-365 / Lb-18</strain>
    </source>
</reference>
<dbReference type="EC" id="3.1.21.10" evidence="1"/>
<dbReference type="EMBL" id="CP000412">
    <property type="protein sequence ID" value="ABJ58496.1"/>
    <property type="molecule type" value="Genomic_DNA"/>
</dbReference>
<dbReference type="RefSeq" id="WP_011543875.1">
    <property type="nucleotide sequence ID" value="NC_008529.1"/>
</dbReference>
<dbReference type="SMR" id="Q04AM6"/>
<dbReference type="KEGG" id="lbu:LBUL_0920"/>
<dbReference type="HOGENOM" id="CLU_096340_0_0_9"/>
<dbReference type="BioCyc" id="LDEL321956:LBUL_RS04395-MONOMER"/>
<dbReference type="GO" id="GO:0005737">
    <property type="term" value="C:cytoplasm"/>
    <property type="evidence" value="ECO:0007669"/>
    <property type="project" value="UniProtKB-SubCell"/>
</dbReference>
<dbReference type="GO" id="GO:0004519">
    <property type="term" value="F:endonuclease activity"/>
    <property type="evidence" value="ECO:0007669"/>
    <property type="project" value="UniProtKB-UniRule"/>
</dbReference>
<dbReference type="GO" id="GO:0000287">
    <property type="term" value="F:magnesium ion binding"/>
    <property type="evidence" value="ECO:0007669"/>
    <property type="project" value="UniProtKB-UniRule"/>
</dbReference>
<dbReference type="GO" id="GO:0003676">
    <property type="term" value="F:nucleic acid binding"/>
    <property type="evidence" value="ECO:0007669"/>
    <property type="project" value="InterPro"/>
</dbReference>
<dbReference type="GO" id="GO:0007059">
    <property type="term" value="P:chromosome segregation"/>
    <property type="evidence" value="ECO:0007669"/>
    <property type="project" value="UniProtKB-UniRule"/>
</dbReference>
<dbReference type="GO" id="GO:0006310">
    <property type="term" value="P:DNA recombination"/>
    <property type="evidence" value="ECO:0007669"/>
    <property type="project" value="UniProtKB-UniRule"/>
</dbReference>
<dbReference type="GO" id="GO:0006281">
    <property type="term" value="P:DNA repair"/>
    <property type="evidence" value="ECO:0007669"/>
    <property type="project" value="UniProtKB-UniRule"/>
</dbReference>
<dbReference type="CDD" id="cd22354">
    <property type="entry name" value="RecU-like"/>
    <property type="match status" value="1"/>
</dbReference>
<dbReference type="Gene3D" id="3.40.1350.10">
    <property type="match status" value="1"/>
</dbReference>
<dbReference type="HAMAP" id="MF_00130">
    <property type="entry name" value="RecU"/>
    <property type="match status" value="1"/>
</dbReference>
<dbReference type="InterPro" id="IPR004612">
    <property type="entry name" value="Resolv_RecU"/>
</dbReference>
<dbReference type="InterPro" id="IPR011335">
    <property type="entry name" value="Restrct_endonuc-II-like"/>
</dbReference>
<dbReference type="InterPro" id="IPR011856">
    <property type="entry name" value="tRNA_endonuc-like_dom_sf"/>
</dbReference>
<dbReference type="NCBIfam" id="NF002584">
    <property type="entry name" value="PRK02234.1-5"/>
    <property type="match status" value="1"/>
</dbReference>
<dbReference type="NCBIfam" id="TIGR00648">
    <property type="entry name" value="recU"/>
    <property type="match status" value="1"/>
</dbReference>
<dbReference type="Pfam" id="PF03838">
    <property type="entry name" value="RecU"/>
    <property type="match status" value="1"/>
</dbReference>
<dbReference type="PIRSF" id="PIRSF037785">
    <property type="entry name" value="RecU"/>
    <property type="match status" value="1"/>
</dbReference>
<dbReference type="SUPFAM" id="SSF52980">
    <property type="entry name" value="Restriction endonuclease-like"/>
    <property type="match status" value="1"/>
</dbReference>
<organism>
    <name type="scientific">Lactobacillus delbrueckii subsp. bulgaricus (strain ATCC BAA-365 / Lb-18)</name>
    <dbReference type="NCBI Taxonomy" id="321956"/>
    <lineage>
        <taxon>Bacteria</taxon>
        <taxon>Bacillati</taxon>
        <taxon>Bacillota</taxon>
        <taxon>Bacilli</taxon>
        <taxon>Lactobacillales</taxon>
        <taxon>Lactobacillaceae</taxon>
        <taxon>Lactobacillus</taxon>
    </lineage>
</organism>
<protein>
    <recommendedName>
        <fullName evidence="1">Holliday junction resolvase RecU</fullName>
        <ecNumber evidence="1">3.1.21.10</ecNumber>
    </recommendedName>
    <alternativeName>
        <fullName evidence="1">Recombination protein U homolog</fullName>
    </alternativeName>
</protein>
<gene>
    <name evidence="1" type="primary">recU</name>
    <name type="ordered locus">LBUL_0920</name>
</gene>
<evidence type="ECO:0000255" key="1">
    <source>
        <dbReference type="HAMAP-Rule" id="MF_00130"/>
    </source>
</evidence>
<proteinExistence type="inferred from homology"/>
<keyword id="KW-0963">Cytoplasm</keyword>
<keyword id="KW-0227">DNA damage</keyword>
<keyword id="KW-0233">DNA recombination</keyword>
<keyword id="KW-0234">DNA repair</keyword>
<keyword id="KW-0255">Endonuclease</keyword>
<keyword id="KW-0378">Hydrolase</keyword>
<keyword id="KW-0460">Magnesium</keyword>
<keyword id="KW-0479">Metal-binding</keyword>
<keyword id="KW-0540">Nuclease</keyword>
<feature type="chain" id="PRO_1000016729" description="Holliday junction resolvase RecU">
    <location>
        <begin position="1"/>
        <end position="210"/>
    </location>
</feature>
<feature type="binding site" evidence="1">
    <location>
        <position position="87"/>
    </location>
    <ligand>
        <name>Mg(2+)</name>
        <dbReference type="ChEBI" id="CHEBI:18420"/>
    </ligand>
</feature>
<feature type="binding site" evidence="1">
    <location>
        <position position="89"/>
    </location>
    <ligand>
        <name>Mg(2+)</name>
        <dbReference type="ChEBI" id="CHEBI:18420"/>
    </ligand>
</feature>
<feature type="binding site" evidence="1">
    <location>
        <position position="102"/>
    </location>
    <ligand>
        <name>Mg(2+)</name>
        <dbReference type="ChEBI" id="CHEBI:18420"/>
    </ligand>
</feature>
<feature type="binding site" evidence="1">
    <location>
        <position position="121"/>
    </location>
    <ligand>
        <name>Mg(2+)</name>
        <dbReference type="ChEBI" id="CHEBI:18420"/>
    </ligand>
</feature>
<feature type="site" description="Transition state stabilizer" evidence="1">
    <location>
        <position position="104"/>
    </location>
</feature>
<accession>Q04AM6</accession>
<comment type="function">
    <text evidence="1">Endonuclease that resolves Holliday junction intermediates in genetic recombination. Cleaves mobile four-strand junctions by introducing symmetrical nicks in paired strands. Promotes annealing of linear ssDNA with homologous dsDNA. Required for DNA repair, homologous recombination and chromosome segregation.</text>
</comment>
<comment type="catalytic activity">
    <reaction evidence="1">
        <text>Endonucleolytic cleavage at a junction such as a reciprocal single-stranded crossover between two homologous DNA duplexes (Holliday junction).</text>
        <dbReference type="EC" id="3.1.21.10"/>
    </reaction>
</comment>
<comment type="cofactor">
    <cofactor evidence="1">
        <name>Mg(2+)</name>
        <dbReference type="ChEBI" id="CHEBI:18420"/>
    </cofactor>
    <text evidence="1">Binds 1 Mg(2+) ion per subunit.</text>
</comment>
<comment type="subcellular location">
    <subcellularLocation>
        <location evidence="1">Cytoplasm</location>
    </subcellularLocation>
</comment>
<comment type="similarity">
    <text evidence="1">Belongs to the RecU family.</text>
</comment>